<keyword id="KW-0488">Methylation</keyword>
<keyword id="KW-1185">Reference proteome</keyword>
<keyword id="KW-0687">Ribonucleoprotein</keyword>
<keyword id="KW-0689">Ribosomal protein</keyword>
<keyword id="KW-0694">RNA-binding</keyword>
<keyword id="KW-0699">rRNA-binding</keyword>
<reference key="1">
    <citation type="submission" date="2005-09" db="EMBL/GenBank/DDBJ databases">
        <title>Complete sequence of chromosome 1 of Rhodobacter sphaeroides 2.4.1.</title>
        <authorList>
            <person name="Copeland A."/>
            <person name="Lucas S."/>
            <person name="Lapidus A."/>
            <person name="Barry K."/>
            <person name="Detter J.C."/>
            <person name="Glavina T."/>
            <person name="Hammon N."/>
            <person name="Israni S."/>
            <person name="Pitluck S."/>
            <person name="Richardson P."/>
            <person name="Mackenzie C."/>
            <person name="Choudhary M."/>
            <person name="Larimer F."/>
            <person name="Hauser L.J."/>
            <person name="Land M."/>
            <person name="Donohue T.J."/>
            <person name="Kaplan S."/>
        </authorList>
    </citation>
    <scope>NUCLEOTIDE SEQUENCE [LARGE SCALE GENOMIC DNA]</scope>
    <source>
        <strain>ATCC 17023 / DSM 158 / JCM 6121 / CCUG 31486 / LMG 2827 / NBRC 12203 / NCIMB 8253 / ATH 2.4.1.</strain>
    </source>
</reference>
<organism>
    <name type="scientific">Cereibacter sphaeroides (strain ATCC 17023 / DSM 158 / JCM 6121 / CCUG 31486 / LMG 2827 / NBRC 12203 / NCIMB 8253 / ATH 2.4.1.)</name>
    <name type="common">Rhodobacter sphaeroides</name>
    <dbReference type="NCBI Taxonomy" id="272943"/>
    <lineage>
        <taxon>Bacteria</taxon>
        <taxon>Pseudomonadati</taxon>
        <taxon>Pseudomonadota</taxon>
        <taxon>Alphaproteobacteria</taxon>
        <taxon>Rhodobacterales</taxon>
        <taxon>Paracoccaceae</taxon>
        <taxon>Cereibacter</taxon>
    </lineage>
</organism>
<accession>Q3J5T4</accession>
<feature type="chain" id="PRO_0000258197" description="Large ribosomal subunit protein uL11">
    <location>
        <begin position="1"/>
        <end position="150"/>
    </location>
</feature>
<sequence length="150" mass="15758">MAKKIIGSLKLQVKAGQANPSPPVGPALGQRGLNIMAFVKEFNAKSADLEPGTPTPVIITYYQDKSFSLELKTPPASFMLKKAAGLAPVGKRNRPKGSTKPGREVAGSVTVAQIRKIAEAKMKDLNANDVEAAMQIILGSAKSCGIEVKG</sequence>
<proteinExistence type="inferred from homology"/>
<protein>
    <recommendedName>
        <fullName evidence="1">Large ribosomal subunit protein uL11</fullName>
    </recommendedName>
    <alternativeName>
        <fullName evidence="2">50S ribosomal protein L11</fullName>
    </alternativeName>
</protein>
<gene>
    <name evidence="1" type="primary">rplK</name>
    <name type="ordered locus">RHOS4_02820</name>
    <name type="ORF">RSP_1703</name>
</gene>
<comment type="function">
    <text evidence="1">Forms part of the ribosomal stalk which helps the ribosome interact with GTP-bound translation factors.</text>
</comment>
<comment type="subunit">
    <text evidence="1">Part of the ribosomal stalk of the 50S ribosomal subunit. Interacts with L10 and the large rRNA to form the base of the stalk. L10 forms an elongated spine to which L12 dimers bind in a sequential fashion forming a multimeric L10(L12)X complex.</text>
</comment>
<comment type="PTM">
    <text evidence="1">One or more lysine residues are methylated.</text>
</comment>
<comment type="similarity">
    <text evidence="1">Belongs to the universal ribosomal protein uL11 family.</text>
</comment>
<dbReference type="EMBL" id="CP000143">
    <property type="protein sequence ID" value="ABA77850.1"/>
    <property type="molecule type" value="Genomic_DNA"/>
</dbReference>
<dbReference type="RefSeq" id="WP_002722470.1">
    <property type="nucleotide sequence ID" value="NZ_CP030271.1"/>
</dbReference>
<dbReference type="RefSeq" id="YP_351751.1">
    <property type="nucleotide sequence ID" value="NC_007493.2"/>
</dbReference>
<dbReference type="SMR" id="Q3J5T4"/>
<dbReference type="STRING" id="272943.RSP_1703"/>
<dbReference type="EnsemblBacteria" id="ABA77850">
    <property type="protein sequence ID" value="ABA77850"/>
    <property type="gene ID" value="RSP_1703"/>
</dbReference>
<dbReference type="GeneID" id="67445488"/>
<dbReference type="KEGG" id="rsp:RSP_1703"/>
<dbReference type="PATRIC" id="fig|272943.9.peg.580"/>
<dbReference type="eggNOG" id="COG0080">
    <property type="taxonomic scope" value="Bacteria"/>
</dbReference>
<dbReference type="OrthoDB" id="9802408at2"/>
<dbReference type="PhylomeDB" id="Q3J5T4"/>
<dbReference type="Proteomes" id="UP000002703">
    <property type="component" value="Chromosome 1"/>
</dbReference>
<dbReference type="GO" id="GO:0022625">
    <property type="term" value="C:cytosolic large ribosomal subunit"/>
    <property type="evidence" value="ECO:0007669"/>
    <property type="project" value="TreeGrafter"/>
</dbReference>
<dbReference type="GO" id="GO:0070180">
    <property type="term" value="F:large ribosomal subunit rRNA binding"/>
    <property type="evidence" value="ECO:0007669"/>
    <property type="project" value="UniProtKB-UniRule"/>
</dbReference>
<dbReference type="GO" id="GO:0003735">
    <property type="term" value="F:structural constituent of ribosome"/>
    <property type="evidence" value="ECO:0007669"/>
    <property type="project" value="InterPro"/>
</dbReference>
<dbReference type="GO" id="GO:0006412">
    <property type="term" value="P:translation"/>
    <property type="evidence" value="ECO:0007669"/>
    <property type="project" value="UniProtKB-UniRule"/>
</dbReference>
<dbReference type="CDD" id="cd00349">
    <property type="entry name" value="Ribosomal_L11"/>
    <property type="match status" value="1"/>
</dbReference>
<dbReference type="FunFam" id="3.30.1550.10:FF:000005">
    <property type="entry name" value="50S ribosomal protein L11"/>
    <property type="match status" value="1"/>
</dbReference>
<dbReference type="Gene3D" id="1.10.10.250">
    <property type="entry name" value="Ribosomal protein L11, C-terminal domain"/>
    <property type="match status" value="1"/>
</dbReference>
<dbReference type="Gene3D" id="3.30.1550.10">
    <property type="entry name" value="Ribosomal protein L11/L12, N-terminal domain"/>
    <property type="match status" value="1"/>
</dbReference>
<dbReference type="HAMAP" id="MF_00736">
    <property type="entry name" value="Ribosomal_uL11"/>
    <property type="match status" value="1"/>
</dbReference>
<dbReference type="InterPro" id="IPR000911">
    <property type="entry name" value="Ribosomal_uL11"/>
</dbReference>
<dbReference type="InterPro" id="IPR006519">
    <property type="entry name" value="Ribosomal_uL11_bac-typ"/>
</dbReference>
<dbReference type="InterPro" id="IPR020783">
    <property type="entry name" value="Ribosomal_uL11_C"/>
</dbReference>
<dbReference type="InterPro" id="IPR036769">
    <property type="entry name" value="Ribosomal_uL11_C_sf"/>
</dbReference>
<dbReference type="InterPro" id="IPR020784">
    <property type="entry name" value="Ribosomal_uL11_N"/>
</dbReference>
<dbReference type="InterPro" id="IPR036796">
    <property type="entry name" value="Ribosomal_uL11_N_sf"/>
</dbReference>
<dbReference type="NCBIfam" id="TIGR01632">
    <property type="entry name" value="L11_bact"/>
    <property type="match status" value="1"/>
</dbReference>
<dbReference type="PANTHER" id="PTHR11661">
    <property type="entry name" value="60S RIBOSOMAL PROTEIN L12"/>
    <property type="match status" value="1"/>
</dbReference>
<dbReference type="PANTHER" id="PTHR11661:SF1">
    <property type="entry name" value="LARGE RIBOSOMAL SUBUNIT PROTEIN UL11M"/>
    <property type="match status" value="1"/>
</dbReference>
<dbReference type="Pfam" id="PF00298">
    <property type="entry name" value="Ribosomal_L11"/>
    <property type="match status" value="1"/>
</dbReference>
<dbReference type="Pfam" id="PF03946">
    <property type="entry name" value="Ribosomal_L11_N"/>
    <property type="match status" value="1"/>
</dbReference>
<dbReference type="SMART" id="SM00649">
    <property type="entry name" value="RL11"/>
    <property type="match status" value="1"/>
</dbReference>
<dbReference type="SUPFAM" id="SSF54747">
    <property type="entry name" value="Ribosomal L11/L12e N-terminal domain"/>
    <property type="match status" value="1"/>
</dbReference>
<dbReference type="SUPFAM" id="SSF46906">
    <property type="entry name" value="Ribosomal protein L11, C-terminal domain"/>
    <property type="match status" value="1"/>
</dbReference>
<name>RL11_CERS4</name>
<evidence type="ECO:0000255" key="1">
    <source>
        <dbReference type="HAMAP-Rule" id="MF_00736"/>
    </source>
</evidence>
<evidence type="ECO:0000305" key="2"/>